<keyword id="KW-0963">Cytoplasm</keyword>
<keyword id="KW-0378">Hydrolase</keyword>
<keyword id="KW-0479">Metal-binding</keyword>
<keyword id="KW-0547">Nucleotide-binding</keyword>
<accession>A4TM39</accession>
<protein>
    <recommendedName>
        <fullName evidence="1">5'-deoxynucleotidase YPDSF_1968</fullName>
        <ecNumber evidence="1">3.1.3.89</ecNumber>
    </recommendedName>
    <alternativeName>
        <fullName evidence="1">5'-deoxyribonucleotidase</fullName>
    </alternativeName>
    <alternativeName>
        <fullName evidence="1">Nucleoside 5'-monophosphate phosphohydrolase</fullName>
    </alternativeName>
</protein>
<feature type="chain" id="PRO_1000064965" description="5'-deoxynucleotidase YPDSF_1968">
    <location>
        <begin position="1"/>
        <end position="197"/>
    </location>
</feature>
<feature type="domain" description="HD" evidence="2">
    <location>
        <begin position="28"/>
        <end position="140"/>
    </location>
</feature>
<feature type="binding site" evidence="1">
    <location>
        <begin position="16"/>
        <end position="17"/>
    </location>
    <ligand>
        <name>substrate</name>
    </ligand>
</feature>
<feature type="binding site" evidence="1">
    <location>
        <position position="31"/>
    </location>
    <ligand>
        <name>a divalent metal cation</name>
        <dbReference type="ChEBI" id="CHEBI:60240"/>
    </ligand>
</feature>
<feature type="binding site" evidence="1">
    <location>
        <position position="31"/>
    </location>
    <ligand>
        <name>substrate</name>
    </ligand>
</feature>
<feature type="binding site" evidence="1">
    <location>
        <position position="66"/>
    </location>
    <ligand>
        <name>a divalent metal cation</name>
        <dbReference type="ChEBI" id="CHEBI:60240"/>
    </ligand>
</feature>
<feature type="binding site" evidence="1">
    <location>
        <position position="67"/>
    </location>
    <ligand>
        <name>a divalent metal cation</name>
        <dbReference type="ChEBI" id="CHEBI:60240"/>
    </ligand>
</feature>
<feature type="binding site" evidence="1">
    <location>
        <position position="67"/>
    </location>
    <ligand>
        <name>substrate</name>
    </ligand>
</feature>
<feature type="binding site" evidence="1">
    <location>
        <begin position="75"/>
        <end position="78"/>
    </location>
    <ligand>
        <name>substrate</name>
    </ligand>
</feature>
<feature type="binding site" evidence="1">
    <location>
        <position position="135"/>
    </location>
    <ligand>
        <name>a divalent metal cation</name>
        <dbReference type="ChEBI" id="CHEBI:60240"/>
    </ligand>
</feature>
<feature type="binding site" evidence="1">
    <location>
        <position position="135"/>
    </location>
    <ligand>
        <name>substrate</name>
    </ligand>
</feature>
<feature type="site" description="Appears to be important in orienting the phosphate for catalysis" evidence="1">
    <location>
        <position position="16"/>
    </location>
</feature>
<proteinExistence type="inferred from homology"/>
<dbReference type="EC" id="3.1.3.89" evidence="1"/>
<dbReference type="EMBL" id="CP000668">
    <property type="protein sequence ID" value="ABP40351.1"/>
    <property type="molecule type" value="Genomic_DNA"/>
</dbReference>
<dbReference type="SMR" id="A4TM39"/>
<dbReference type="KEGG" id="ypp:YPDSF_1968"/>
<dbReference type="PATRIC" id="fig|386656.14.peg.3435"/>
<dbReference type="GO" id="GO:0005737">
    <property type="term" value="C:cytoplasm"/>
    <property type="evidence" value="ECO:0007669"/>
    <property type="project" value="UniProtKB-SubCell"/>
</dbReference>
<dbReference type="GO" id="GO:0002953">
    <property type="term" value="F:5'-deoxynucleotidase activity"/>
    <property type="evidence" value="ECO:0007669"/>
    <property type="project" value="UniProtKB-EC"/>
</dbReference>
<dbReference type="GO" id="GO:0046872">
    <property type="term" value="F:metal ion binding"/>
    <property type="evidence" value="ECO:0007669"/>
    <property type="project" value="UniProtKB-KW"/>
</dbReference>
<dbReference type="GO" id="GO:0000166">
    <property type="term" value="F:nucleotide binding"/>
    <property type="evidence" value="ECO:0007669"/>
    <property type="project" value="UniProtKB-KW"/>
</dbReference>
<dbReference type="FunFam" id="1.10.3210.10:FF:000002">
    <property type="entry name" value="Nucleotidase YfbR"/>
    <property type="match status" value="1"/>
</dbReference>
<dbReference type="Gene3D" id="1.10.3210.10">
    <property type="entry name" value="Hypothetical protein af1432"/>
    <property type="match status" value="1"/>
</dbReference>
<dbReference type="HAMAP" id="MF_01100">
    <property type="entry name" value="5DNU"/>
    <property type="match status" value="1"/>
</dbReference>
<dbReference type="InterPro" id="IPR003607">
    <property type="entry name" value="HD/PDEase_dom"/>
</dbReference>
<dbReference type="InterPro" id="IPR006674">
    <property type="entry name" value="HD_domain"/>
</dbReference>
<dbReference type="InterPro" id="IPR022971">
    <property type="entry name" value="YfbR"/>
</dbReference>
<dbReference type="InterPro" id="IPR039356">
    <property type="entry name" value="YfbR/HDDC2"/>
</dbReference>
<dbReference type="NCBIfam" id="NF003009">
    <property type="entry name" value="PRK03826.1"/>
    <property type="match status" value="1"/>
</dbReference>
<dbReference type="PANTHER" id="PTHR11845">
    <property type="entry name" value="5'-DEOXYNUCLEOTIDASE HDDC2"/>
    <property type="match status" value="1"/>
</dbReference>
<dbReference type="PANTHER" id="PTHR11845:SF13">
    <property type="entry name" value="5'-DEOXYNUCLEOTIDASE HDDC2"/>
    <property type="match status" value="1"/>
</dbReference>
<dbReference type="Pfam" id="PF12917">
    <property type="entry name" value="YfbR-like"/>
    <property type="match status" value="1"/>
</dbReference>
<dbReference type="SMART" id="SM00471">
    <property type="entry name" value="HDc"/>
    <property type="match status" value="1"/>
</dbReference>
<dbReference type="SUPFAM" id="SSF109604">
    <property type="entry name" value="HD-domain/PDEase-like"/>
    <property type="match status" value="1"/>
</dbReference>
<dbReference type="PROSITE" id="PS51831">
    <property type="entry name" value="HD"/>
    <property type="match status" value="1"/>
</dbReference>
<organism>
    <name type="scientific">Yersinia pestis (strain Pestoides F)</name>
    <dbReference type="NCBI Taxonomy" id="386656"/>
    <lineage>
        <taxon>Bacteria</taxon>
        <taxon>Pseudomonadati</taxon>
        <taxon>Pseudomonadota</taxon>
        <taxon>Gammaproteobacteria</taxon>
        <taxon>Enterobacterales</taxon>
        <taxon>Yersiniaceae</taxon>
        <taxon>Yersinia</taxon>
    </lineage>
</organism>
<evidence type="ECO:0000255" key="1">
    <source>
        <dbReference type="HAMAP-Rule" id="MF_01100"/>
    </source>
</evidence>
<evidence type="ECO:0000255" key="2">
    <source>
        <dbReference type="PROSITE-ProRule" id="PRU01175"/>
    </source>
</evidence>
<gene>
    <name type="ordered locus">YPDSF_1968</name>
</gene>
<sequence length="197" mass="22729">MSHFFAHLSRLKLINRWPLMRNVRTENVSEHSLQVAFVAHALAIIKNRKFNGNLNAERIALLAMYHDASEVITGDLPTPIKYHNPKIAHEYKKIEKVAQQKLIEMLPKELQHDFRCLLDEHYYSEEEKALVKQADALCAYLKCLEELSAGNNEFIQAKARLEKTLAIRQSPEMDYFMAVFVPSFSLSLDEISLDSLD</sequence>
<name>5DNU_YERPP</name>
<reference key="1">
    <citation type="submission" date="2007-02" db="EMBL/GenBank/DDBJ databases">
        <title>Complete sequence of chromosome of Yersinia pestis Pestoides F.</title>
        <authorList>
            <consortium name="US DOE Joint Genome Institute"/>
            <person name="Copeland A."/>
            <person name="Lucas S."/>
            <person name="Lapidus A."/>
            <person name="Barry K."/>
            <person name="Detter J.C."/>
            <person name="Glavina del Rio T."/>
            <person name="Hammon N."/>
            <person name="Israni S."/>
            <person name="Dalin E."/>
            <person name="Tice H."/>
            <person name="Pitluck S."/>
            <person name="Di Bartolo G."/>
            <person name="Chain P."/>
            <person name="Malfatti S."/>
            <person name="Shin M."/>
            <person name="Vergez L."/>
            <person name="Schmutz J."/>
            <person name="Larimer F."/>
            <person name="Land M."/>
            <person name="Hauser L."/>
            <person name="Worsham P."/>
            <person name="Chu M."/>
            <person name="Bearden S."/>
            <person name="Garcia E."/>
            <person name="Richardson P."/>
        </authorList>
    </citation>
    <scope>NUCLEOTIDE SEQUENCE [LARGE SCALE GENOMIC DNA]</scope>
    <source>
        <strain>Pestoides F</strain>
    </source>
</reference>
<comment type="function">
    <text evidence="1">Catalyzes the strictly specific dephosphorylation of 2'-deoxyribonucleoside 5'-monophosphates.</text>
</comment>
<comment type="catalytic activity">
    <reaction evidence="1">
        <text>a 2'-deoxyribonucleoside 5'-phosphate + H2O = a 2'-deoxyribonucleoside + phosphate</text>
        <dbReference type="Rhea" id="RHEA:36167"/>
        <dbReference type="ChEBI" id="CHEBI:15377"/>
        <dbReference type="ChEBI" id="CHEBI:18274"/>
        <dbReference type="ChEBI" id="CHEBI:43474"/>
        <dbReference type="ChEBI" id="CHEBI:65317"/>
        <dbReference type="EC" id="3.1.3.89"/>
    </reaction>
</comment>
<comment type="cofactor">
    <cofactor evidence="1">
        <name>a divalent metal cation</name>
        <dbReference type="ChEBI" id="CHEBI:60240"/>
    </cofactor>
</comment>
<comment type="subunit">
    <text evidence="1">Homodimer.</text>
</comment>
<comment type="subcellular location">
    <subcellularLocation>
        <location evidence="1">Cytoplasm</location>
    </subcellularLocation>
</comment>
<comment type="similarity">
    <text evidence="1">Belongs to the 5DNU family.</text>
</comment>